<evidence type="ECO:0000255" key="1">
    <source>
        <dbReference type="HAMAP-Rule" id="MF_01325"/>
    </source>
</evidence>
<evidence type="ECO:0000256" key="2">
    <source>
        <dbReference type="SAM" id="MobiDB-lite"/>
    </source>
</evidence>
<evidence type="ECO:0000305" key="3"/>
<comment type="function">
    <text evidence="1">One of the primary rRNA binding proteins, it binds directly near the 3'-end of the 23S rRNA, where it nucleates assembly of the 50S subunit.</text>
</comment>
<comment type="subunit">
    <text evidence="1">Part of the 50S ribosomal subunit. Forms a cluster with proteins L14 and L19.</text>
</comment>
<comment type="similarity">
    <text evidence="1">Belongs to the universal ribosomal protein uL3 family.</text>
</comment>
<reference key="1">
    <citation type="journal article" date="2009" name="BMC Genomics">
        <title>Genome evolution driven by host adaptations results in a more virulent and antimicrobial-resistant Streptococcus pneumoniae serotype 14.</title>
        <authorList>
            <person name="Ding F."/>
            <person name="Tang P."/>
            <person name="Hsu M.-H."/>
            <person name="Cui P."/>
            <person name="Hu S."/>
            <person name="Yu J."/>
            <person name="Chiu C.-H."/>
        </authorList>
    </citation>
    <scope>NUCLEOTIDE SEQUENCE [LARGE SCALE GENOMIC DNA]</scope>
    <source>
        <strain>CGSP14</strain>
    </source>
</reference>
<protein>
    <recommendedName>
        <fullName evidence="1">Large ribosomal subunit protein uL3</fullName>
    </recommendedName>
    <alternativeName>
        <fullName evidence="3">50S ribosomal protein L3</fullName>
    </alternativeName>
</protein>
<gene>
    <name evidence="1" type="primary">rplC</name>
    <name type="ordered locus">SPCG_0218</name>
</gene>
<name>RL3_STRPS</name>
<sequence length="208" mass="22178">MTKGILGKKVGMTQIFTEAGELIPVTVIEATPNVVLQVKTVETDGYNAIQVGFDDKREVLSNKPAKGHVAKANTAPKRFIREFKNVEGLEVGAEITVETFAAGDVVDVTGTSKGKGFQGVIKRHGQSRGPMAHGSRYHRRPGSMGPVAPNRVFKGKNLAGRMGGDRVTIQNLEVVQVVPEKNVILIKGNVPGAKKSLITIKSAVKAGK</sequence>
<accession>B2IS40</accession>
<keyword id="KW-0687">Ribonucleoprotein</keyword>
<keyword id="KW-0689">Ribosomal protein</keyword>
<keyword id="KW-0694">RNA-binding</keyword>
<keyword id="KW-0699">rRNA-binding</keyword>
<organism>
    <name type="scientific">Streptococcus pneumoniae (strain CGSP14)</name>
    <dbReference type="NCBI Taxonomy" id="516950"/>
    <lineage>
        <taxon>Bacteria</taxon>
        <taxon>Bacillati</taxon>
        <taxon>Bacillota</taxon>
        <taxon>Bacilli</taxon>
        <taxon>Lactobacillales</taxon>
        <taxon>Streptococcaceae</taxon>
        <taxon>Streptococcus</taxon>
    </lineage>
</organism>
<proteinExistence type="inferred from homology"/>
<dbReference type="EMBL" id="CP001033">
    <property type="protein sequence ID" value="ACB89470.1"/>
    <property type="molecule type" value="Genomic_DNA"/>
</dbReference>
<dbReference type="RefSeq" id="WP_000160197.1">
    <property type="nucleotide sequence ID" value="NC_010582.1"/>
</dbReference>
<dbReference type="SMR" id="B2IS40"/>
<dbReference type="GeneID" id="93738957"/>
<dbReference type="KEGG" id="spw:SPCG_0218"/>
<dbReference type="HOGENOM" id="CLU_044142_4_1_9"/>
<dbReference type="GO" id="GO:0022625">
    <property type="term" value="C:cytosolic large ribosomal subunit"/>
    <property type="evidence" value="ECO:0007669"/>
    <property type="project" value="TreeGrafter"/>
</dbReference>
<dbReference type="GO" id="GO:0019843">
    <property type="term" value="F:rRNA binding"/>
    <property type="evidence" value="ECO:0007669"/>
    <property type="project" value="UniProtKB-UniRule"/>
</dbReference>
<dbReference type="GO" id="GO:0003735">
    <property type="term" value="F:structural constituent of ribosome"/>
    <property type="evidence" value="ECO:0007669"/>
    <property type="project" value="InterPro"/>
</dbReference>
<dbReference type="GO" id="GO:0006412">
    <property type="term" value="P:translation"/>
    <property type="evidence" value="ECO:0007669"/>
    <property type="project" value="UniProtKB-UniRule"/>
</dbReference>
<dbReference type="FunFam" id="2.40.30.10:FF:000004">
    <property type="entry name" value="50S ribosomal protein L3"/>
    <property type="match status" value="1"/>
</dbReference>
<dbReference type="FunFam" id="3.30.160.810:FF:000002">
    <property type="entry name" value="50S ribosomal protein L3"/>
    <property type="match status" value="1"/>
</dbReference>
<dbReference type="Gene3D" id="3.30.160.810">
    <property type="match status" value="1"/>
</dbReference>
<dbReference type="Gene3D" id="2.40.30.10">
    <property type="entry name" value="Translation factors"/>
    <property type="match status" value="1"/>
</dbReference>
<dbReference type="HAMAP" id="MF_01325_B">
    <property type="entry name" value="Ribosomal_uL3_B"/>
    <property type="match status" value="1"/>
</dbReference>
<dbReference type="InterPro" id="IPR000597">
    <property type="entry name" value="Ribosomal_uL3"/>
</dbReference>
<dbReference type="InterPro" id="IPR019927">
    <property type="entry name" value="Ribosomal_uL3_bac/org-type"/>
</dbReference>
<dbReference type="InterPro" id="IPR019926">
    <property type="entry name" value="Ribosomal_uL3_CS"/>
</dbReference>
<dbReference type="InterPro" id="IPR009000">
    <property type="entry name" value="Transl_B-barrel_sf"/>
</dbReference>
<dbReference type="NCBIfam" id="TIGR03625">
    <property type="entry name" value="L3_bact"/>
    <property type="match status" value="1"/>
</dbReference>
<dbReference type="PANTHER" id="PTHR11229">
    <property type="entry name" value="50S RIBOSOMAL PROTEIN L3"/>
    <property type="match status" value="1"/>
</dbReference>
<dbReference type="PANTHER" id="PTHR11229:SF16">
    <property type="entry name" value="LARGE RIBOSOMAL SUBUNIT PROTEIN UL3C"/>
    <property type="match status" value="1"/>
</dbReference>
<dbReference type="Pfam" id="PF00297">
    <property type="entry name" value="Ribosomal_L3"/>
    <property type="match status" value="1"/>
</dbReference>
<dbReference type="SUPFAM" id="SSF50447">
    <property type="entry name" value="Translation proteins"/>
    <property type="match status" value="1"/>
</dbReference>
<dbReference type="PROSITE" id="PS00474">
    <property type="entry name" value="RIBOSOMAL_L3"/>
    <property type="match status" value="1"/>
</dbReference>
<feature type="chain" id="PRO_1000141929" description="Large ribosomal subunit protein uL3">
    <location>
        <begin position="1"/>
        <end position="208"/>
    </location>
</feature>
<feature type="region of interest" description="Disordered" evidence="2">
    <location>
        <begin position="116"/>
        <end position="148"/>
    </location>
</feature>